<comment type="catalytic activity">
    <reaction>
        <text>D-glyceraldehyde 3-phosphate + phosphate + NADP(+) = (2R)-3-phospho-glyceroyl phosphate + NADPH + H(+)</text>
        <dbReference type="Rhea" id="RHEA:10296"/>
        <dbReference type="ChEBI" id="CHEBI:15378"/>
        <dbReference type="ChEBI" id="CHEBI:43474"/>
        <dbReference type="ChEBI" id="CHEBI:57604"/>
        <dbReference type="ChEBI" id="CHEBI:57783"/>
        <dbReference type="ChEBI" id="CHEBI:58349"/>
        <dbReference type="ChEBI" id="CHEBI:59776"/>
        <dbReference type="EC" id="1.2.1.13"/>
    </reaction>
</comment>
<comment type="pathway">
    <text>Carbohydrate biosynthesis; Calvin cycle.</text>
</comment>
<comment type="subunit">
    <text evidence="1">Tetramer of either four A chains (GAPDH 2) or two A and two B chains (GAPDH 1).</text>
</comment>
<comment type="subcellular location">
    <subcellularLocation>
        <location evidence="1">Plastid</location>
        <location evidence="1">Chloroplast</location>
    </subcellularLocation>
</comment>
<comment type="miscellaneous">
    <text>Plants contain two types of GAPDH: cytosolic forms which participate in glycolysis and chloroplast forms which participate in photosynthesis. All the forms are encoded by distinct genes.</text>
</comment>
<comment type="similarity">
    <text evidence="3">Belongs to the glyceraldehyde-3-phosphate dehydrogenase family.</text>
</comment>
<feature type="chain" id="PRO_0000145617" description="Glyceraldehyde-3-phosphate dehydrogenase A, chloroplastic">
    <location>
        <begin position="1" status="less than"/>
        <end position="233"/>
    </location>
</feature>
<feature type="active site" description="Nucleophile" evidence="2">
    <location>
        <position position="50"/>
    </location>
</feature>
<feature type="binding site" evidence="1">
    <location>
        <begin position="49"/>
        <end position="51"/>
    </location>
    <ligand>
        <name>D-glyceraldehyde 3-phosphate</name>
        <dbReference type="ChEBI" id="CHEBI:59776"/>
    </ligand>
</feature>
<feature type="binding site" evidence="1">
    <location>
        <position position="80"/>
    </location>
    <ligand>
        <name>D-glyceraldehyde 3-phosphate</name>
        <dbReference type="ChEBI" id="CHEBI:59776"/>
    </ligand>
</feature>
<feature type="binding site" evidence="1">
    <location>
        <position position="95"/>
    </location>
    <ligand>
        <name>D-glyceraldehyde 3-phosphate</name>
        <dbReference type="ChEBI" id="CHEBI:59776"/>
    </ligand>
</feature>
<feature type="binding site" evidence="1">
    <location>
        <begin position="108"/>
        <end position="109"/>
    </location>
    <ligand>
        <name>D-glyceraldehyde 3-phosphate</name>
        <dbReference type="ChEBI" id="CHEBI:59776"/>
    </ligand>
</feature>
<feature type="binding site" evidence="1">
    <location>
        <position position="131"/>
    </location>
    <ligand>
        <name>D-glyceraldehyde 3-phosphate</name>
        <dbReference type="ChEBI" id="CHEBI:59776"/>
    </ligand>
</feature>
<feature type="binding site" evidence="1">
    <location>
        <position position="213"/>
    </location>
    <ligand>
        <name>NADP(+)</name>
        <dbReference type="ChEBI" id="CHEBI:58349"/>
    </ligand>
</feature>
<feature type="site" description="Activates thiol group during catalysis" evidence="1">
    <location>
        <position position="77"/>
    </location>
</feature>
<feature type="non-terminal residue">
    <location>
        <position position="1"/>
    </location>
</feature>
<sequence>DREGAGKHIQAGAKKVLITAPGKGDIPTYVVGVNAELYSHEDTIISNASCTTNCLAPFVKVLDQKFGIIKGTMTTTHSYTGDQRLLDASHRDLRRARAAALNIVPTSTGAAKAVALVLPNLKGKLNGIALRVPTPNVSVVDLVVQVSKKTFAEEVNAAFRDAAEKELKGILDVCDEPLVSVDFRCSDVSSTIDSSLTMVMGDDMVKVIAWYDNEWGYSQRVVDLADIVANNWK</sequence>
<gene>
    <name type="primary">GAPA</name>
</gene>
<organism>
    <name type="scientific">Sinapis alba</name>
    <name type="common">White mustard</name>
    <name type="synonym">Brassica hirta</name>
    <dbReference type="NCBI Taxonomy" id="3728"/>
    <lineage>
        <taxon>Eukaryota</taxon>
        <taxon>Viridiplantae</taxon>
        <taxon>Streptophyta</taxon>
        <taxon>Embryophyta</taxon>
        <taxon>Tracheophyta</taxon>
        <taxon>Spermatophyta</taxon>
        <taxon>Magnoliopsida</taxon>
        <taxon>eudicotyledons</taxon>
        <taxon>Gunneridae</taxon>
        <taxon>Pentapetalae</taxon>
        <taxon>rosids</taxon>
        <taxon>malvids</taxon>
        <taxon>Brassicales</taxon>
        <taxon>Brassicaceae</taxon>
        <taxon>Brassiceae</taxon>
        <taxon>Sinapis</taxon>
    </lineage>
</organism>
<name>G3PA_SINAL</name>
<keyword id="KW-0113">Calvin cycle</keyword>
<keyword id="KW-0150">Chloroplast</keyword>
<keyword id="KW-0521">NADP</keyword>
<keyword id="KW-0560">Oxidoreductase</keyword>
<keyword id="KW-0934">Plastid</keyword>
<dbReference type="EC" id="1.2.1.13"/>
<dbReference type="EMBL" id="X04302">
    <property type="protein sequence ID" value="CAA27845.1"/>
    <property type="molecule type" value="mRNA"/>
</dbReference>
<dbReference type="PIR" id="B24796">
    <property type="entry name" value="B24796"/>
</dbReference>
<dbReference type="SMR" id="P09672"/>
<dbReference type="UniPathway" id="UPA00116"/>
<dbReference type="GO" id="GO:0009507">
    <property type="term" value="C:chloroplast"/>
    <property type="evidence" value="ECO:0007669"/>
    <property type="project" value="UniProtKB-SubCell"/>
</dbReference>
<dbReference type="GO" id="GO:0047100">
    <property type="term" value="F:glyceraldehyde-3-phosphate dehydrogenase (NADP+) (phosphorylating) activity"/>
    <property type="evidence" value="ECO:0007669"/>
    <property type="project" value="UniProtKB-EC"/>
</dbReference>
<dbReference type="GO" id="GO:0051287">
    <property type="term" value="F:NAD binding"/>
    <property type="evidence" value="ECO:0007669"/>
    <property type="project" value="InterPro"/>
</dbReference>
<dbReference type="GO" id="GO:0019253">
    <property type="term" value="P:reductive pentose-phosphate cycle"/>
    <property type="evidence" value="ECO:0007669"/>
    <property type="project" value="UniProtKB-UniPathway"/>
</dbReference>
<dbReference type="CDD" id="cd18126">
    <property type="entry name" value="GAPDH_I_C"/>
    <property type="match status" value="1"/>
</dbReference>
<dbReference type="FunFam" id="3.30.360.10:FF:000002">
    <property type="entry name" value="Glyceraldehyde-3-phosphate dehydrogenase"/>
    <property type="match status" value="1"/>
</dbReference>
<dbReference type="Gene3D" id="3.30.360.10">
    <property type="entry name" value="Dihydrodipicolinate Reductase, domain 2"/>
    <property type="match status" value="1"/>
</dbReference>
<dbReference type="Gene3D" id="3.40.50.720">
    <property type="entry name" value="NAD(P)-binding Rossmann-like Domain"/>
    <property type="match status" value="1"/>
</dbReference>
<dbReference type="InterPro" id="IPR020831">
    <property type="entry name" value="GlycerAld/Erythrose_P_DH"/>
</dbReference>
<dbReference type="InterPro" id="IPR020830">
    <property type="entry name" value="GlycerAld_3-P_DH_AS"/>
</dbReference>
<dbReference type="InterPro" id="IPR020829">
    <property type="entry name" value="GlycerAld_3-P_DH_cat"/>
</dbReference>
<dbReference type="InterPro" id="IPR020828">
    <property type="entry name" value="GlycerAld_3-P_DH_NAD(P)-bd"/>
</dbReference>
<dbReference type="InterPro" id="IPR036291">
    <property type="entry name" value="NAD(P)-bd_dom_sf"/>
</dbReference>
<dbReference type="PANTHER" id="PTHR43148">
    <property type="entry name" value="GLYCERALDEHYDE-3-PHOSPHATE DEHYDROGENASE 2"/>
    <property type="match status" value="1"/>
</dbReference>
<dbReference type="Pfam" id="PF02800">
    <property type="entry name" value="Gp_dh_C"/>
    <property type="match status" value="1"/>
</dbReference>
<dbReference type="PRINTS" id="PR00078">
    <property type="entry name" value="G3PDHDRGNASE"/>
</dbReference>
<dbReference type="SMART" id="SM00846">
    <property type="entry name" value="Gp_dh_N"/>
    <property type="match status" value="1"/>
</dbReference>
<dbReference type="SUPFAM" id="SSF55347">
    <property type="entry name" value="Glyceraldehyde-3-phosphate dehydrogenase-like, C-terminal domain"/>
    <property type="match status" value="1"/>
</dbReference>
<dbReference type="SUPFAM" id="SSF51735">
    <property type="entry name" value="NAD(P)-binding Rossmann-fold domains"/>
    <property type="match status" value="1"/>
</dbReference>
<dbReference type="PROSITE" id="PS00071">
    <property type="entry name" value="GAPDH"/>
    <property type="match status" value="1"/>
</dbReference>
<evidence type="ECO:0000250" key="1"/>
<evidence type="ECO:0000255" key="2">
    <source>
        <dbReference type="PROSITE-ProRule" id="PRU10009"/>
    </source>
</evidence>
<evidence type="ECO:0000305" key="3"/>
<reference key="1">
    <citation type="journal article" date="1986" name="Eur. J. Biochem.">
        <title>Prokaryotic features of a nucleus-encoded enzyme. cDNA sequences for chloroplast and cytosolic glyceraldehyde-3-phosphate dehydrogenases from mustard (Sinapis alba).</title>
        <authorList>
            <person name="Martin W.F."/>
            <person name="Cerff R."/>
        </authorList>
    </citation>
    <scope>NUCLEOTIDE SEQUENCE [MRNA]</scope>
</reference>
<protein>
    <recommendedName>
        <fullName>Glyceraldehyde-3-phosphate dehydrogenase A, chloroplastic</fullName>
        <ecNumber>1.2.1.13</ecNumber>
    </recommendedName>
    <alternativeName>
        <fullName>NADP-dependent glyceraldehydephosphate dehydrogenase subunit A</fullName>
    </alternativeName>
</protein>
<proteinExistence type="evidence at transcript level"/>
<accession>P09672</accession>